<keyword id="KW-0002">3D-structure</keyword>
<keyword id="KW-0010">Activator</keyword>
<keyword id="KW-0025">Alternative splicing</keyword>
<keyword id="KW-0160">Chromosomal rearrangement</keyword>
<keyword id="KW-0225">Disease variant</keyword>
<keyword id="KW-0238">DNA-binding</keyword>
<keyword id="KW-0539">Nucleus</keyword>
<keyword id="KW-0597">Phosphoprotein</keyword>
<keyword id="KW-1267">Proteomics identification</keyword>
<keyword id="KW-0656">Proto-oncogene</keyword>
<keyword id="KW-1185">Reference proteome</keyword>
<keyword id="KW-0804">Transcription</keyword>
<keyword id="KW-0805">Transcription regulation</keyword>
<organism>
    <name type="scientific">Homo sapiens</name>
    <name type="common">Human</name>
    <dbReference type="NCBI Taxonomy" id="9606"/>
    <lineage>
        <taxon>Eukaryota</taxon>
        <taxon>Metazoa</taxon>
        <taxon>Chordata</taxon>
        <taxon>Craniata</taxon>
        <taxon>Vertebrata</taxon>
        <taxon>Euteleostomi</taxon>
        <taxon>Mammalia</taxon>
        <taxon>Eutheria</taxon>
        <taxon>Euarchontoglires</taxon>
        <taxon>Primates</taxon>
        <taxon>Haplorrhini</taxon>
        <taxon>Catarrhini</taxon>
        <taxon>Hominidae</taxon>
        <taxon>Homo</taxon>
    </lineage>
</organism>
<name>FLI1_HUMAN</name>
<feature type="chain" id="PRO_0000204124" description="Friend leukemia integration 1 transcription factor">
    <location>
        <begin position="1"/>
        <end position="452"/>
    </location>
</feature>
<feature type="domain" description="PNT" evidence="3">
    <location>
        <begin position="112"/>
        <end position="198"/>
    </location>
</feature>
<feature type="DNA-binding region" description="ETS" evidence="2">
    <location>
        <begin position="281"/>
        <end position="361"/>
    </location>
</feature>
<feature type="region of interest" description="Disordered" evidence="4">
    <location>
        <begin position="209"/>
        <end position="271"/>
    </location>
</feature>
<feature type="region of interest" description="Disordered" evidence="4">
    <location>
        <begin position="433"/>
        <end position="452"/>
    </location>
</feature>
<feature type="compositionally biased region" description="Basic and acidic residues" evidence="4">
    <location>
        <begin position="215"/>
        <end position="226"/>
    </location>
</feature>
<feature type="compositionally biased region" description="Polar residues" evidence="4">
    <location>
        <begin position="248"/>
        <end position="257"/>
    </location>
</feature>
<feature type="modified residue" description="Phosphoserine" evidence="1">
    <location>
        <position position="39"/>
    </location>
</feature>
<feature type="splice variant" id="VSP_046943" description="In isoform 4." evidence="10">
    <original>MDGTIKEALSVVSDDQSLFDSAYGAAAHLPKADMTASGSPDYGQPHKINPLPPQQEWINQPVRVNVKREYDHMNGSRESPVDCSVSKCSKLVGGGESNPMNYNSYMDEKNGPPPPNMTTNERRVIVPADPTLWTQEHVRQWLEWAIKEYSLMEIDTSFFQNMDGKELCKMNKEDFLRATTLYNTEVLLSHLSYLRES</original>
    <variation>MDPG</variation>
    <location>
        <begin position="1"/>
        <end position="197"/>
    </location>
</feature>
<feature type="splice variant" id="VSP_001478" description="In isoform 2." evidence="11 12">
    <original>MDGTIKEALSVVSDDQSLFDSAYGAAAHLPKADMTASGSPDYGQPHKINPLPPQQEWINQPVRVNVKREYDHMNGS</original>
    <variation>MEGGLAGERA</variation>
    <location>
        <begin position="1"/>
        <end position="76"/>
    </location>
</feature>
<feature type="splice variant" id="VSP_045276" description="In isoform 3." evidence="10">
    <location>
        <begin position="1"/>
        <end position="33"/>
    </location>
</feature>
<feature type="sequence variant" id="VAR_078929" description="In BDPLT21; decreased function in positive regulation of DNA-templated transcription; dbSNP:rs773148506." evidence="8">
    <original>R</original>
    <variation>W</variation>
    <location>
        <position position="324"/>
    </location>
</feature>
<feature type="sequence variant" id="VAR_078930" description="In BDPLT21; loss of function in positive regulation of DNA-templated transcription; decreased localization to nucleus; no effect on protein abundance; dbSNP:rs1064797086." evidence="9">
    <original>R</original>
    <variation>Q</variation>
    <location>
        <position position="337"/>
    </location>
</feature>
<feature type="sequence variant" id="VAR_078931" description="In BDPLT21; loss of function in positive regulation of DNA-templated transcription; dbSNP:rs1064797083." evidence="7">
    <original>R</original>
    <variation>W</variation>
    <location>
        <position position="337"/>
    </location>
</feature>
<feature type="sequence variant" id="VAR_078932" description="In BDPLT21; loss of function in positive regulation of DNA-templated transcription; dbSNP:rs1064797084." evidence="7">
    <original>Y</original>
    <variation>C</variation>
    <location>
        <position position="343"/>
    </location>
</feature>
<feature type="sequence variant" id="VAR_078933" description="In BDPLT21; loss of function in positive regulation of DNA-templated transcription; decreased localization to nucleus; no effect on protein abundance; dbSNP:rs1064797087." evidence="9">
    <original>K</original>
    <variation>E</variation>
    <location>
        <position position="345"/>
    </location>
</feature>
<feature type="sequence conflict" description="In Ref. 5; AAA58479." evidence="13" ref="5">
    <original>E</original>
    <variation>V</variation>
    <location>
        <position position="69"/>
    </location>
</feature>
<feature type="sequence conflict" description="In Ref. 5; AAA58479." evidence="13" ref="5">
    <location>
        <position position="77"/>
    </location>
</feature>
<feature type="sequence conflict" description="In Ref. 5; AAA58479/AAA58480." evidence="13" ref="5">
    <original>P</original>
    <variation>A</variation>
    <location>
        <position position="130"/>
    </location>
</feature>
<feature type="sequence conflict" description="In Ref. 5; AAA58479/AAA58480." evidence="13" ref="5">
    <original>W</original>
    <variation>V</variation>
    <location>
        <position position="133"/>
    </location>
</feature>
<feature type="sequence conflict" description="In Ref. 8; BAG61938." evidence="13" ref="8">
    <original>S</original>
    <variation>N</variation>
    <location>
        <position position="294"/>
    </location>
</feature>
<feature type="sequence conflict" description="In Ref. 4; AAB23637 and 5; AAA58479/AAA58480." evidence="13" ref="4 5">
    <original>E</original>
    <variation>Q</variation>
    <location>
        <position position="323"/>
    </location>
</feature>
<feature type="sequence conflict" description="In Ref. 5; AAA58479/AAA58480." evidence="13" ref="5">
    <location>
        <position position="426"/>
    </location>
</feature>
<feature type="strand" evidence="15">
    <location>
        <begin position="112"/>
        <end position="114"/>
    </location>
</feature>
<feature type="strand" evidence="14">
    <location>
        <begin position="120"/>
        <end position="122"/>
    </location>
</feature>
<feature type="helix" evidence="14">
    <location>
        <begin position="130"/>
        <end position="132"/>
    </location>
</feature>
<feature type="helix" evidence="14">
    <location>
        <begin position="137"/>
        <end position="148"/>
    </location>
</feature>
<feature type="helix" evidence="14">
    <location>
        <begin position="156"/>
        <end position="159"/>
    </location>
</feature>
<feature type="helix" evidence="14">
    <location>
        <begin position="164"/>
        <end position="169"/>
    </location>
</feature>
<feature type="helix" evidence="14">
    <location>
        <begin position="172"/>
        <end position="176"/>
    </location>
</feature>
<feature type="helix" evidence="14">
    <location>
        <begin position="181"/>
        <end position="195"/>
    </location>
</feature>
<feature type="helix" evidence="16">
    <location>
        <begin position="283"/>
        <end position="291"/>
    </location>
</feature>
<feature type="helix" evidence="16">
    <location>
        <begin position="294"/>
        <end position="296"/>
    </location>
</feature>
<feature type="turn" evidence="16">
    <location>
        <begin position="297"/>
        <end position="299"/>
    </location>
</feature>
<feature type="strand" evidence="17">
    <location>
        <begin position="300"/>
        <end position="302"/>
    </location>
</feature>
<feature type="strand" evidence="16">
    <location>
        <begin position="308"/>
        <end position="310"/>
    </location>
</feature>
<feature type="helix" evidence="16">
    <location>
        <begin position="314"/>
        <end position="324"/>
    </location>
</feature>
<feature type="helix" evidence="16">
    <location>
        <begin position="332"/>
        <end position="344"/>
    </location>
</feature>
<feature type="strand" evidence="16">
    <location>
        <begin position="347"/>
        <end position="350"/>
    </location>
</feature>
<feature type="strand" evidence="16">
    <location>
        <begin position="352"/>
        <end position="360"/>
    </location>
</feature>
<feature type="helix" evidence="16">
    <location>
        <begin position="362"/>
        <end position="368"/>
    </location>
</feature>
<accession>Q01543</accession>
<accession>B2R8H2</accession>
<accession>B4DFV4</accession>
<accession>B4DTC6</accession>
<accession>G3V183</accession>
<accession>Q14319</accession>
<accession>Q92480</accession>
<accession>Q9UE07</accession>
<dbReference type="EMBL" id="X67001">
    <property type="protein sequence ID" value="CAA47399.1"/>
    <property type="molecule type" value="mRNA"/>
</dbReference>
<dbReference type="EMBL" id="M98833">
    <property type="protein sequence ID" value="AAA35812.2"/>
    <property type="molecule type" value="mRNA"/>
</dbReference>
<dbReference type="EMBL" id="S45205">
    <property type="protein sequence ID" value="AAB23637.1"/>
    <property type="molecule type" value="mRNA"/>
</dbReference>
<dbReference type="EMBL" id="M93255">
    <property type="protein sequence ID" value="AAA58479.1"/>
    <property type="molecule type" value="mRNA"/>
</dbReference>
<dbReference type="EMBL" id="M93255">
    <property type="protein sequence ID" value="AAA58480.1"/>
    <property type="molecule type" value="mRNA"/>
</dbReference>
<dbReference type="EMBL" id="AY029368">
    <property type="protein sequence ID" value="AAK50443.1"/>
    <property type="molecule type" value="mRNA"/>
</dbReference>
<dbReference type="EMBL" id="AK294279">
    <property type="protein sequence ID" value="BAG57565.1"/>
    <property type="molecule type" value="mRNA"/>
</dbReference>
<dbReference type="EMBL" id="AK300153">
    <property type="protein sequence ID" value="BAG61938.1"/>
    <property type="molecule type" value="mRNA"/>
</dbReference>
<dbReference type="EMBL" id="AK313370">
    <property type="protein sequence ID" value="BAG36169.1"/>
    <property type="molecule type" value="mRNA"/>
</dbReference>
<dbReference type="EMBL" id="AP001122">
    <property type="status" value="NOT_ANNOTATED_CDS"/>
    <property type="molecule type" value="Genomic_DNA"/>
</dbReference>
<dbReference type="EMBL" id="CH471065">
    <property type="protein sequence ID" value="EAW67715.1"/>
    <property type="molecule type" value="Genomic_DNA"/>
</dbReference>
<dbReference type="EMBL" id="CH471065">
    <property type="protein sequence ID" value="EAW67718.1"/>
    <property type="molecule type" value="Genomic_DNA"/>
</dbReference>
<dbReference type="EMBL" id="BC001670">
    <property type="protein sequence ID" value="AAH01670.1"/>
    <property type="molecule type" value="mRNA"/>
</dbReference>
<dbReference type="EMBL" id="BC010115">
    <property type="protein sequence ID" value="AAH10115.1"/>
    <property type="molecule type" value="mRNA"/>
</dbReference>
<dbReference type="EMBL" id="Y17293">
    <property type="protein sequence ID" value="CAA76731.1"/>
    <property type="molecule type" value="Genomic_DNA"/>
</dbReference>
<dbReference type="EMBL" id="D38408">
    <property type="protein sequence ID" value="BAA07463.1"/>
    <property type="status" value="ALT_TERM"/>
    <property type="molecule type" value="Genomic_DNA"/>
</dbReference>
<dbReference type="CCDS" id="CCDS44768.1">
    <molecule id="Q01543-1"/>
</dbReference>
<dbReference type="CCDS" id="CCDS53725.1">
    <molecule id="Q01543-3"/>
</dbReference>
<dbReference type="CCDS" id="CCDS59230.1">
    <molecule id="Q01543-4"/>
</dbReference>
<dbReference type="CCDS" id="CCDS59231.1">
    <molecule id="Q01543-2"/>
</dbReference>
<dbReference type="PIR" id="I37565">
    <property type="entry name" value="I37565"/>
</dbReference>
<dbReference type="PIR" id="S29844">
    <property type="entry name" value="S29844"/>
</dbReference>
<dbReference type="RefSeq" id="NP_001161153.1">
    <molecule id="Q01543-3"/>
    <property type="nucleotide sequence ID" value="NM_001167681.3"/>
</dbReference>
<dbReference type="RefSeq" id="NP_001257939.1">
    <molecule id="Q01543-2"/>
    <property type="nucleotide sequence ID" value="NM_001271010.2"/>
</dbReference>
<dbReference type="RefSeq" id="NP_001257941.1">
    <molecule id="Q01543-4"/>
    <property type="nucleotide sequence ID" value="NM_001271012.2"/>
</dbReference>
<dbReference type="RefSeq" id="NP_002008.2">
    <molecule id="Q01543-1"/>
    <property type="nucleotide sequence ID" value="NM_002017.4"/>
</dbReference>
<dbReference type="RefSeq" id="XP_011541003.1">
    <molecule id="Q01543-3"/>
    <property type="nucleotide sequence ID" value="XM_011542701.3"/>
</dbReference>
<dbReference type="RefSeq" id="XP_016872894.1">
    <molecule id="Q01543-3"/>
    <property type="nucleotide sequence ID" value="XM_017017405.2"/>
</dbReference>
<dbReference type="RefSeq" id="XP_016872895.1">
    <molecule id="Q01543-3"/>
    <property type="nucleotide sequence ID" value="XM_017017406.2"/>
</dbReference>
<dbReference type="RefSeq" id="XP_047282586.1">
    <molecule id="Q01543-3"/>
    <property type="nucleotide sequence ID" value="XM_047426630.1"/>
</dbReference>
<dbReference type="PDB" id="1FLI">
    <property type="method" value="NMR"/>
    <property type="chains" value="A=276-373"/>
</dbReference>
<dbReference type="PDB" id="1X66">
    <property type="method" value="NMR"/>
    <property type="chains" value="A=114-198"/>
</dbReference>
<dbReference type="PDB" id="2YTU">
    <property type="method" value="NMR"/>
    <property type="chains" value="A=100-220"/>
</dbReference>
<dbReference type="PDB" id="5E8G">
    <property type="method" value="X-ray"/>
    <property type="resolution" value="2.70 A"/>
    <property type="chains" value="A/B/C/D=276-399"/>
</dbReference>
<dbReference type="PDB" id="5E8I">
    <property type="method" value="X-ray"/>
    <property type="resolution" value="3.45 A"/>
    <property type="chains" value="A/D/G/J=276-399"/>
</dbReference>
<dbReference type="PDB" id="5JVT">
    <property type="method" value="X-ray"/>
    <property type="resolution" value="3.10 A"/>
    <property type="chains" value="A/D/G=276-375"/>
</dbReference>
<dbReference type="PDB" id="6VG2">
    <property type="method" value="X-ray"/>
    <property type="resolution" value="3.90 A"/>
    <property type="chains" value="A/D=276-375"/>
</dbReference>
<dbReference type="PDB" id="6VG8">
    <property type="method" value="X-ray"/>
    <property type="resolution" value="4.31 A"/>
    <property type="chains" value="A=276-375"/>
</dbReference>
<dbReference type="PDB" id="6VGD">
    <property type="method" value="X-ray"/>
    <property type="resolution" value="4.20 A"/>
    <property type="chains" value="A=276-375"/>
</dbReference>
<dbReference type="PDB" id="9CP6">
    <property type="method" value="X-ray"/>
    <property type="resolution" value="1.66 A"/>
    <property type="chains" value="A=259-371"/>
</dbReference>
<dbReference type="PDB" id="9MWY">
    <property type="method" value="X-ray"/>
    <property type="resolution" value="3.28 A"/>
    <property type="chains" value="A/C/D/L=259-399"/>
</dbReference>
<dbReference type="PDB" id="9MX8">
    <property type="method" value="X-ray"/>
    <property type="resolution" value="3.15 A"/>
    <property type="chains" value="A/C/D=259-375"/>
</dbReference>
<dbReference type="PDB" id="9MX9">
    <property type="method" value="X-ray"/>
    <property type="resolution" value="2.55 A"/>
    <property type="chains" value="A/D=259-399"/>
</dbReference>
<dbReference type="PDB" id="9MXA">
    <property type="method" value="X-ray"/>
    <property type="resolution" value="2.59 A"/>
    <property type="chains" value="A/D=259-399"/>
</dbReference>
<dbReference type="PDBsum" id="1FLI"/>
<dbReference type="PDBsum" id="1X66"/>
<dbReference type="PDBsum" id="2YTU"/>
<dbReference type="PDBsum" id="5E8G"/>
<dbReference type="PDBsum" id="5E8I"/>
<dbReference type="PDBsum" id="5JVT"/>
<dbReference type="PDBsum" id="6VG2"/>
<dbReference type="PDBsum" id="6VG8"/>
<dbReference type="PDBsum" id="6VGD"/>
<dbReference type="PDBsum" id="9CP6"/>
<dbReference type="PDBsum" id="9MWY"/>
<dbReference type="PDBsum" id="9MX8"/>
<dbReference type="PDBsum" id="9MX9"/>
<dbReference type="PDBsum" id="9MXA"/>
<dbReference type="BMRB" id="Q01543"/>
<dbReference type="SMR" id="Q01543"/>
<dbReference type="BioGRID" id="108602">
    <property type="interactions" value="56"/>
</dbReference>
<dbReference type="CORUM" id="Q01543"/>
<dbReference type="FunCoup" id="Q01543">
    <property type="interactions" value="2735"/>
</dbReference>
<dbReference type="IntAct" id="Q01543">
    <property type="interactions" value="17"/>
</dbReference>
<dbReference type="MINT" id="Q01543"/>
<dbReference type="STRING" id="9606.ENSP00000433488"/>
<dbReference type="BindingDB" id="Q01543"/>
<dbReference type="ChEMBL" id="CHEMBL5465299"/>
<dbReference type="GlyCosmos" id="Q01543">
    <property type="glycosylation" value="14 sites, 2 glycans"/>
</dbReference>
<dbReference type="GlyGen" id="Q01543">
    <property type="glycosylation" value="14 sites, 2 O-linked glycans (14 sites)"/>
</dbReference>
<dbReference type="iPTMnet" id="Q01543"/>
<dbReference type="MetOSite" id="Q01543"/>
<dbReference type="PhosphoSitePlus" id="Q01543"/>
<dbReference type="BioMuta" id="FLI1"/>
<dbReference type="DMDM" id="399496"/>
<dbReference type="jPOST" id="Q01543"/>
<dbReference type="MassIVE" id="Q01543"/>
<dbReference type="PaxDb" id="9606-ENSP00000433488"/>
<dbReference type="PeptideAtlas" id="Q01543"/>
<dbReference type="ProteomicsDB" id="32288"/>
<dbReference type="ProteomicsDB" id="4083"/>
<dbReference type="ProteomicsDB" id="57969">
    <molecule id="Q01543-1"/>
</dbReference>
<dbReference type="ProteomicsDB" id="57970">
    <molecule id="Q01543-2"/>
</dbReference>
<dbReference type="Pumba" id="Q01543"/>
<dbReference type="Antibodypedia" id="9350">
    <property type="antibodies" value="743 antibodies from 44 providers"/>
</dbReference>
<dbReference type="DNASU" id="2313"/>
<dbReference type="Ensembl" id="ENST00000281428.12">
    <molecule id="Q01543-2"/>
    <property type="protein sequence ID" value="ENSP00000281428.8"/>
    <property type="gene ID" value="ENSG00000151702.18"/>
</dbReference>
<dbReference type="Ensembl" id="ENST00000344954.10">
    <molecule id="Q01543-4"/>
    <property type="protein sequence ID" value="ENSP00000339627.7"/>
    <property type="gene ID" value="ENSG00000151702.18"/>
</dbReference>
<dbReference type="Ensembl" id="ENST00000527786.7">
    <molecule id="Q01543-1"/>
    <property type="protein sequence ID" value="ENSP00000433488.2"/>
    <property type="gene ID" value="ENSG00000151702.18"/>
</dbReference>
<dbReference type="Ensembl" id="ENST00000534087.3">
    <molecule id="Q01543-3"/>
    <property type="protein sequence ID" value="ENSP00000432950.1"/>
    <property type="gene ID" value="ENSG00000151702.18"/>
</dbReference>
<dbReference type="GeneID" id="2313"/>
<dbReference type="KEGG" id="hsa:2313"/>
<dbReference type="MANE-Select" id="ENST00000527786.7">
    <property type="protein sequence ID" value="ENSP00000433488.2"/>
    <property type="RefSeq nucleotide sequence ID" value="NM_002017.5"/>
    <property type="RefSeq protein sequence ID" value="NP_002008.2"/>
</dbReference>
<dbReference type="UCSC" id="uc009zci.4">
    <molecule id="Q01543-1"/>
    <property type="organism name" value="human"/>
</dbReference>
<dbReference type="AGR" id="HGNC:3749"/>
<dbReference type="CTD" id="2313"/>
<dbReference type="DisGeNET" id="2313"/>
<dbReference type="GeneCards" id="FLI1"/>
<dbReference type="HGNC" id="HGNC:3749">
    <property type="gene designation" value="FLI1"/>
</dbReference>
<dbReference type="HPA" id="ENSG00000151702">
    <property type="expression patterns" value="Tissue enhanced (lymphoid)"/>
</dbReference>
<dbReference type="MalaCards" id="FLI1"/>
<dbReference type="MIM" id="193067">
    <property type="type" value="gene"/>
</dbReference>
<dbReference type="MIM" id="612219">
    <property type="type" value="phenotype"/>
</dbReference>
<dbReference type="MIM" id="617443">
    <property type="type" value="phenotype"/>
</dbReference>
<dbReference type="neXtProt" id="NX_Q01543"/>
<dbReference type="OpenTargets" id="ENSG00000151702"/>
<dbReference type="Orphanet" id="370334">
    <property type="disease" value="Extraskeletal Ewing sarcoma"/>
</dbReference>
<dbReference type="Orphanet" id="248340">
    <property type="disease" value="Isolated delta-storage pool disease"/>
</dbReference>
<dbReference type="Orphanet" id="2308">
    <property type="disease" value="Jacobsen syndrome"/>
</dbReference>
<dbReference type="Orphanet" id="851">
    <property type="disease" value="Paris-Trousseau thrombocytopenia"/>
</dbReference>
<dbReference type="Orphanet" id="370348">
    <property type="disease" value="Peripheral primitive neuroectodermal tumor"/>
</dbReference>
<dbReference type="Orphanet" id="319">
    <property type="disease" value="Skeletal Ewing sarcoma"/>
</dbReference>
<dbReference type="PharmGKB" id="PA28170"/>
<dbReference type="VEuPathDB" id="HostDB:ENSG00000151702"/>
<dbReference type="eggNOG" id="KOG3806">
    <property type="taxonomic scope" value="Eukaryota"/>
</dbReference>
<dbReference type="GeneTree" id="ENSGT00940000158261"/>
<dbReference type="HOGENOM" id="CLU_933700_0_0_1"/>
<dbReference type="InParanoid" id="Q01543"/>
<dbReference type="OMA" id="XSLLAYN"/>
<dbReference type="OrthoDB" id="10067219at2759"/>
<dbReference type="PAN-GO" id="Q01543">
    <property type="GO annotations" value="4 GO annotations based on evolutionary models"/>
</dbReference>
<dbReference type="PhylomeDB" id="Q01543"/>
<dbReference type="TreeFam" id="TF350537"/>
<dbReference type="PathwayCommons" id="Q01543"/>
<dbReference type="Reactome" id="R-HSA-9616222">
    <property type="pathway name" value="Transcriptional regulation of granulopoiesis"/>
</dbReference>
<dbReference type="SignaLink" id="Q01543"/>
<dbReference type="SIGNOR" id="Q01543"/>
<dbReference type="BioGRID-ORCS" id="2313">
    <property type="hits" value="61 hits in 1178 CRISPR screens"/>
</dbReference>
<dbReference type="CD-CODE" id="232F8A39">
    <property type="entry name" value="P-body"/>
</dbReference>
<dbReference type="CD-CODE" id="3C81F809">
    <property type="entry name" value="Synthetic Condensate 000288"/>
</dbReference>
<dbReference type="CD-CODE" id="D3EAE6DE">
    <property type="entry name" value="EWS-FLI1"/>
</dbReference>
<dbReference type="CD-CODE" id="DEE660B4">
    <property type="entry name" value="Stress granule"/>
</dbReference>
<dbReference type="ChiTaRS" id="FLI1">
    <property type="organism name" value="human"/>
</dbReference>
<dbReference type="EvolutionaryTrace" id="Q01543"/>
<dbReference type="GeneWiki" id="FLI1"/>
<dbReference type="GenomeRNAi" id="2313"/>
<dbReference type="Pharos" id="Q01543">
    <property type="development level" value="Tbio"/>
</dbReference>
<dbReference type="PRO" id="PR:Q01543"/>
<dbReference type="Proteomes" id="UP000005640">
    <property type="component" value="Chromosome 11"/>
</dbReference>
<dbReference type="RNAct" id="Q01543">
    <property type="molecule type" value="protein"/>
</dbReference>
<dbReference type="Bgee" id="ENSG00000151702">
    <property type="expression patterns" value="Expressed in monocyte and 167 other cell types or tissues"/>
</dbReference>
<dbReference type="ExpressionAtlas" id="Q01543">
    <property type="expression patterns" value="baseline and differential"/>
</dbReference>
<dbReference type="GO" id="GO:0000785">
    <property type="term" value="C:chromatin"/>
    <property type="evidence" value="ECO:0000247"/>
    <property type="project" value="NTNU_SB"/>
</dbReference>
<dbReference type="GO" id="GO:0005829">
    <property type="term" value="C:cytosol"/>
    <property type="evidence" value="ECO:0000314"/>
    <property type="project" value="HPA"/>
</dbReference>
<dbReference type="GO" id="GO:0016604">
    <property type="term" value="C:nuclear body"/>
    <property type="evidence" value="ECO:0000314"/>
    <property type="project" value="HPA"/>
</dbReference>
<dbReference type="GO" id="GO:0005654">
    <property type="term" value="C:nucleoplasm"/>
    <property type="evidence" value="ECO:0000314"/>
    <property type="project" value="HPA"/>
</dbReference>
<dbReference type="GO" id="GO:0005634">
    <property type="term" value="C:nucleus"/>
    <property type="evidence" value="ECO:0000314"/>
    <property type="project" value="UniProtKB"/>
</dbReference>
<dbReference type="GO" id="GO:0003682">
    <property type="term" value="F:chromatin binding"/>
    <property type="evidence" value="ECO:0007669"/>
    <property type="project" value="Ensembl"/>
</dbReference>
<dbReference type="GO" id="GO:0003677">
    <property type="term" value="F:DNA binding"/>
    <property type="evidence" value="ECO:0000304"/>
    <property type="project" value="ProtInc"/>
</dbReference>
<dbReference type="GO" id="GO:0001228">
    <property type="term" value="F:DNA-binding transcription activator activity, RNA polymerase II-specific"/>
    <property type="evidence" value="ECO:0007669"/>
    <property type="project" value="Ensembl"/>
</dbReference>
<dbReference type="GO" id="GO:0003700">
    <property type="term" value="F:DNA-binding transcription factor activity"/>
    <property type="evidence" value="ECO:0000304"/>
    <property type="project" value="ProtInc"/>
</dbReference>
<dbReference type="GO" id="GO:0000981">
    <property type="term" value="F:DNA-binding transcription factor activity, RNA polymerase II-specific"/>
    <property type="evidence" value="ECO:0000247"/>
    <property type="project" value="NTNU_SB"/>
</dbReference>
<dbReference type="GO" id="GO:0000978">
    <property type="term" value="F:RNA polymerase II cis-regulatory region sequence-specific DNA binding"/>
    <property type="evidence" value="ECO:0007669"/>
    <property type="project" value="Ensembl"/>
</dbReference>
<dbReference type="GO" id="GO:1990837">
    <property type="term" value="F:sequence-specific double-stranded DNA binding"/>
    <property type="evidence" value="ECO:0000314"/>
    <property type="project" value="ARUK-UCL"/>
</dbReference>
<dbReference type="GO" id="GO:0000976">
    <property type="term" value="F:transcription cis-regulatory region binding"/>
    <property type="evidence" value="ECO:0000314"/>
    <property type="project" value="ARUK-UCL"/>
</dbReference>
<dbReference type="GO" id="GO:0009887">
    <property type="term" value="P:animal organ morphogenesis"/>
    <property type="evidence" value="ECO:0000304"/>
    <property type="project" value="ProtInc"/>
</dbReference>
<dbReference type="GO" id="GO:0008015">
    <property type="term" value="P:blood circulation"/>
    <property type="evidence" value="ECO:0007669"/>
    <property type="project" value="Ensembl"/>
</dbReference>
<dbReference type="GO" id="GO:0030154">
    <property type="term" value="P:cell differentiation"/>
    <property type="evidence" value="ECO:0000318"/>
    <property type="project" value="GO_Central"/>
</dbReference>
<dbReference type="GO" id="GO:0007599">
    <property type="term" value="P:hemostasis"/>
    <property type="evidence" value="ECO:0000304"/>
    <property type="project" value="ProtInc"/>
</dbReference>
<dbReference type="GO" id="GO:0035855">
    <property type="term" value="P:megakaryocyte development"/>
    <property type="evidence" value="ECO:0007669"/>
    <property type="project" value="Ensembl"/>
</dbReference>
<dbReference type="GO" id="GO:0045893">
    <property type="term" value="P:positive regulation of DNA-templated transcription"/>
    <property type="evidence" value="ECO:0000314"/>
    <property type="project" value="UniProtKB"/>
</dbReference>
<dbReference type="GO" id="GO:0006357">
    <property type="term" value="P:regulation of transcription by RNA polymerase II"/>
    <property type="evidence" value="ECO:0000318"/>
    <property type="project" value="GO_Central"/>
</dbReference>
<dbReference type="CDD" id="cd08541">
    <property type="entry name" value="SAM_PNT-FLI-1"/>
    <property type="match status" value="1"/>
</dbReference>
<dbReference type="FunFam" id="1.10.150.50:FF:000010">
    <property type="entry name" value="Fli-1 proto-oncogene, ETS transcription factor"/>
    <property type="match status" value="1"/>
</dbReference>
<dbReference type="FunFam" id="1.10.10.10:FF:000039">
    <property type="entry name" value="Friend leukemia integration 1 transcription factor"/>
    <property type="match status" value="1"/>
</dbReference>
<dbReference type="Gene3D" id="1.10.150.50">
    <property type="entry name" value="Transcription Factor, Ets-1"/>
    <property type="match status" value="1"/>
</dbReference>
<dbReference type="Gene3D" id="1.10.10.10">
    <property type="entry name" value="Winged helix-like DNA-binding domain superfamily/Winged helix DNA-binding domain"/>
    <property type="match status" value="1"/>
</dbReference>
<dbReference type="InterPro" id="IPR000418">
    <property type="entry name" value="Ets_dom"/>
</dbReference>
<dbReference type="InterPro" id="IPR046328">
    <property type="entry name" value="ETS_fam"/>
</dbReference>
<dbReference type="InterPro" id="IPR003118">
    <property type="entry name" value="Pointed_dom"/>
</dbReference>
<dbReference type="InterPro" id="IPR013761">
    <property type="entry name" value="SAM/pointed_sf"/>
</dbReference>
<dbReference type="InterPro" id="IPR035573">
    <property type="entry name" value="SAM_PNT-FLI-1"/>
</dbReference>
<dbReference type="InterPro" id="IPR036388">
    <property type="entry name" value="WH-like_DNA-bd_sf"/>
</dbReference>
<dbReference type="InterPro" id="IPR036390">
    <property type="entry name" value="WH_DNA-bd_sf"/>
</dbReference>
<dbReference type="PANTHER" id="PTHR11849">
    <property type="entry name" value="ETS"/>
    <property type="match status" value="1"/>
</dbReference>
<dbReference type="PANTHER" id="PTHR11849:SF161">
    <property type="entry name" value="FRIEND LEUKEMIA INTEGRATION 1 TRANSCRIPTION FACTOR"/>
    <property type="match status" value="1"/>
</dbReference>
<dbReference type="Pfam" id="PF00178">
    <property type="entry name" value="Ets"/>
    <property type="match status" value="1"/>
</dbReference>
<dbReference type="Pfam" id="PF02198">
    <property type="entry name" value="SAM_PNT"/>
    <property type="match status" value="1"/>
</dbReference>
<dbReference type="PRINTS" id="PR00454">
    <property type="entry name" value="ETSDOMAIN"/>
</dbReference>
<dbReference type="SMART" id="SM00413">
    <property type="entry name" value="ETS"/>
    <property type="match status" value="1"/>
</dbReference>
<dbReference type="SMART" id="SM00251">
    <property type="entry name" value="SAM_PNT"/>
    <property type="match status" value="1"/>
</dbReference>
<dbReference type="SUPFAM" id="SSF47769">
    <property type="entry name" value="SAM/Pointed domain"/>
    <property type="match status" value="1"/>
</dbReference>
<dbReference type="SUPFAM" id="SSF46785">
    <property type="entry name" value="Winged helix' DNA-binding domain"/>
    <property type="match status" value="1"/>
</dbReference>
<dbReference type="PROSITE" id="PS00345">
    <property type="entry name" value="ETS_DOMAIN_1"/>
    <property type="match status" value="1"/>
</dbReference>
<dbReference type="PROSITE" id="PS00346">
    <property type="entry name" value="ETS_DOMAIN_2"/>
    <property type="match status" value="1"/>
</dbReference>
<dbReference type="PROSITE" id="PS50061">
    <property type="entry name" value="ETS_DOMAIN_3"/>
    <property type="match status" value="1"/>
</dbReference>
<dbReference type="PROSITE" id="PS51433">
    <property type="entry name" value="PNT"/>
    <property type="match status" value="1"/>
</dbReference>
<comment type="function">
    <text evidence="7 8 9">Sequence-specific transcriptional activator (PubMed:24100448, PubMed:26316623, PubMed:28255014). Recognizes the DNA sequence 5'-C[CA]GGAAGT-3'.</text>
</comment>
<comment type="subunit">
    <text>Can form homodimers or heterodimers with ETV6/TEL1.</text>
</comment>
<comment type="interaction">
    <interactant intactId="EBI-2271018">
        <id>Q01543</id>
    </interactant>
    <interactant intactId="EBI-10171902">
        <id>P56545-3</id>
        <label>CTBP2</label>
    </interactant>
    <organismsDiffer>false</organismsDiffer>
    <experiments>3</experiments>
</comment>
<comment type="interaction">
    <interactant intactId="EBI-2271018">
        <id>Q01543</id>
    </interactant>
    <interactant intactId="EBI-747107">
        <id>Q8IUQ4</id>
        <label>SIAH1</label>
    </interactant>
    <organismsDiffer>false</organismsDiffer>
    <experiments>3</experiments>
</comment>
<comment type="interaction">
    <interactant intactId="EBI-2271018">
        <id>Q01543</id>
    </interactant>
    <interactant intactId="EBI-347161">
        <id>P84022</id>
        <label>SMAD3</label>
    </interactant>
    <organismsDiffer>false</organismsDiffer>
    <experiments>3</experiments>
</comment>
<comment type="interaction">
    <interactant intactId="EBI-2271018">
        <id>Q01543</id>
    </interactant>
    <interactant intactId="EBI-742973">
        <id>O94993</id>
        <label>SOX30</label>
    </interactant>
    <organismsDiffer>false</organismsDiffer>
    <experiments>3</experiments>
</comment>
<comment type="subcellular location">
    <subcellularLocation>
        <location evidence="9">Nucleus</location>
    </subcellularLocation>
</comment>
<comment type="alternative products">
    <event type="alternative splicing"/>
    <isoform>
        <id>Q01543-1</id>
        <name>1</name>
        <sequence type="displayed"/>
    </isoform>
    <isoform>
        <id>Q01543-2</id>
        <name>2</name>
        <sequence type="described" ref="VSP_001478"/>
    </isoform>
    <isoform>
        <id>Q01543-3</id>
        <name>3</name>
        <sequence type="described" ref="VSP_045276"/>
    </isoform>
    <isoform>
        <id>Q01543-4</id>
        <name>4</name>
        <sequence type="described" ref="VSP_046943"/>
    </isoform>
</comment>
<comment type="disease" evidence="5 6">
    <disease id="DI-02610">
        <name>Ewing sarcoma</name>
        <acronym>ES</acronym>
        <description>A highly malignant, metastatic, primitive small round cell tumor of bone and soft tissue that affects children and adolescents. It belongs to the Ewing sarcoma family of tumors, a group of morphologically heterogeneous neoplasms that share the same cytogenetic features. They are considered neural tumors derived from cells of the neural crest. Ewing sarcoma represents the less differentiated form of the tumors.</description>
        <dbReference type="MIM" id="612219"/>
    </disease>
    <text evidence="5 6">The gene represented in this entry is involved in disease pathogenesis. A chromosomal aberration involving FLI1 is found in patients with Erwing sarcoma. Translocation t(11;22)(q24;q12) with EWSR1.</text>
</comment>
<comment type="disease" evidence="7 8 9">
    <disease id="DI-04984">
        <name>Bleeding disorder, platelet-type, 21</name>
        <acronym>BDPLT21</acronym>
        <description>A disorder characterized by increased bleeding tendency due to platelet dysfunction. Clinical features include epistaxis, hematomas, bleeding after tooth extraction, and menorrhagia. BDPLT21 patients may have mild to moderate thrombocytopenia.</description>
        <dbReference type="MIM" id="617443"/>
    </disease>
    <text>The disease is caused by variants affecting the gene represented in this entry.</text>
</comment>
<comment type="miscellaneous">
    <text>Located on a fragment of chromosome 11 flanked on the centromeric side by the acute lymphoblastic leukemia-associated t(4;11)(q21;q23) translocation breakpoint and on the telomeric side by the Ewing- and neuroepithelioma-associated t(11;22) (q24;q12) breakpoint.</text>
</comment>
<comment type="similarity">
    <text evidence="13">Belongs to the ETS family.</text>
</comment>
<comment type="online information" name="Atlas of Genetics and Cytogenetics in Oncology and Haematology">
    <link uri="https://atlasgeneticsoncology.org/gene/79/FLI1"/>
</comment>
<gene>
    <name type="primary">FLI1</name>
</gene>
<proteinExistence type="evidence at protein level"/>
<reference key="1">
    <citation type="journal article" date="1992" name="Nature">
        <title>Gene fusion with an ETS DNA-binding domain caused by chromosome translocation in human tumours.</title>
        <authorList>
            <person name="Delattre O."/>
            <person name="Zucman J."/>
            <person name="Plougastel B."/>
            <person name="Desmaze C."/>
            <person name="Melot T."/>
            <person name="Peter M."/>
            <person name="Kovar H."/>
            <person name="Joubert I."/>
            <person name="de Jong P."/>
            <person name="Rouleau G."/>
            <person name="Aurias A."/>
            <person name="Thomas G."/>
        </authorList>
    </citation>
    <scope>NUCLEOTIDE SEQUENCE [MRNA] (ISOFORM 1)</scope>
    <scope>CHROMOSOMAL TRANSLOCATION</scope>
    <source>
        <tissue>Bone marrow</tissue>
    </source>
</reference>
<reference key="2">
    <citation type="journal article" date="1992" name="Cell Growth Differ.">
        <title>The ERGB/Fli-1 gene: isolation and characterization of a new member of the family of human ETS transcription factors.</title>
        <authorList>
            <person name="Watson D.K."/>
            <person name="Smyth F.E."/>
            <person name="Thompson D.M."/>
            <person name="Cheng J.Q."/>
            <person name="Testa J.R."/>
            <person name="Papas T.S."/>
            <person name="Seth A."/>
        </authorList>
    </citation>
    <scope>NUCLEOTIDE SEQUENCE [MRNA] (ISOFORM 1)</scope>
</reference>
<reference key="3">
    <citation type="submission" date="2000-02" db="EMBL/GenBank/DDBJ databases">
        <authorList>
            <person name="Watson D."/>
        </authorList>
    </citation>
    <scope>SEQUENCE REVISION</scope>
</reference>
<reference key="4">
    <citation type="journal article" date="1992" name="Cancer Res.">
        <title>Structure and expression of human Fli-1 gene.</title>
        <authorList>
            <person name="Prasad D.D."/>
            <person name="Rao V.N."/>
            <person name="Reddy E.S."/>
        </authorList>
    </citation>
    <scope>NUCLEOTIDE SEQUENCE [MRNA] (ISOFORM 1)</scope>
</reference>
<reference key="5">
    <citation type="journal article" date="1993" name="Biochim. Biophys. Acta">
        <title>Human FLI-1 localizes to chromosome 11q24 and has an aberrant transcript in neuroepithelioma.</title>
        <authorList>
            <person name="Hromas R."/>
            <person name="May W."/>
            <person name="Denny C."/>
            <person name="Raskind W."/>
            <person name="Moore J."/>
            <person name="Maki R.A."/>
            <person name="Beck E."/>
            <person name="Klemsz M.J."/>
        </authorList>
    </citation>
    <scope>NUCLEOTIDE SEQUENCE [MRNA] (ISOFORMS 1 AND 2)</scope>
    <source>
        <tissue>Blood</tissue>
    </source>
</reference>
<reference key="6">
    <citation type="journal article" date="1991" name="Genomics">
        <title>The human homolog of the mouse common viral integration region, FLI1, maps to 11q23-q24.</title>
        <authorList>
            <person name="Baud V."/>
            <person name="Lipinski M."/>
            <person name="Rassart E."/>
            <person name="Poliquin L."/>
            <person name="Bergeron D."/>
        </authorList>
    </citation>
    <scope>NUCLEOTIDE SEQUENCE [MRNA] (ISOFORMS 1 AND 2)</scope>
    <scope>CHROMOSOMAL TRANSLOCATION</scope>
</reference>
<reference key="7">
    <citation type="submission" date="2001-04" db="EMBL/GenBank/DDBJ databases">
        <authorList>
            <person name="Ubhi B.T.S."/>
            <person name="Rainey D.R."/>
            <person name="Meredith D.M."/>
        </authorList>
    </citation>
    <scope>NUCLEOTIDE SEQUENCE [MRNA] (ISOFORM 1)</scope>
</reference>
<reference key="8">
    <citation type="journal article" date="2004" name="Nat. Genet.">
        <title>Complete sequencing and characterization of 21,243 full-length human cDNAs.</title>
        <authorList>
            <person name="Ota T."/>
            <person name="Suzuki Y."/>
            <person name="Nishikawa T."/>
            <person name="Otsuki T."/>
            <person name="Sugiyama T."/>
            <person name="Irie R."/>
            <person name="Wakamatsu A."/>
            <person name="Hayashi K."/>
            <person name="Sato H."/>
            <person name="Nagai K."/>
            <person name="Kimura K."/>
            <person name="Makita H."/>
            <person name="Sekine M."/>
            <person name="Obayashi M."/>
            <person name="Nishi T."/>
            <person name="Shibahara T."/>
            <person name="Tanaka T."/>
            <person name="Ishii S."/>
            <person name="Yamamoto J."/>
            <person name="Saito K."/>
            <person name="Kawai Y."/>
            <person name="Isono Y."/>
            <person name="Nakamura Y."/>
            <person name="Nagahari K."/>
            <person name="Murakami K."/>
            <person name="Yasuda T."/>
            <person name="Iwayanagi T."/>
            <person name="Wagatsuma M."/>
            <person name="Shiratori A."/>
            <person name="Sudo H."/>
            <person name="Hosoiri T."/>
            <person name="Kaku Y."/>
            <person name="Kodaira H."/>
            <person name="Kondo H."/>
            <person name="Sugawara M."/>
            <person name="Takahashi M."/>
            <person name="Kanda K."/>
            <person name="Yokoi T."/>
            <person name="Furuya T."/>
            <person name="Kikkawa E."/>
            <person name="Omura Y."/>
            <person name="Abe K."/>
            <person name="Kamihara K."/>
            <person name="Katsuta N."/>
            <person name="Sato K."/>
            <person name="Tanikawa M."/>
            <person name="Yamazaki M."/>
            <person name="Ninomiya K."/>
            <person name="Ishibashi T."/>
            <person name="Yamashita H."/>
            <person name="Murakawa K."/>
            <person name="Fujimori K."/>
            <person name="Tanai H."/>
            <person name="Kimata M."/>
            <person name="Watanabe M."/>
            <person name="Hiraoka S."/>
            <person name="Chiba Y."/>
            <person name="Ishida S."/>
            <person name="Ono Y."/>
            <person name="Takiguchi S."/>
            <person name="Watanabe S."/>
            <person name="Yosida M."/>
            <person name="Hotuta T."/>
            <person name="Kusano J."/>
            <person name="Kanehori K."/>
            <person name="Takahashi-Fujii A."/>
            <person name="Hara H."/>
            <person name="Tanase T.-O."/>
            <person name="Nomura Y."/>
            <person name="Togiya S."/>
            <person name="Komai F."/>
            <person name="Hara R."/>
            <person name="Takeuchi K."/>
            <person name="Arita M."/>
            <person name="Imose N."/>
            <person name="Musashino K."/>
            <person name="Yuuki H."/>
            <person name="Oshima A."/>
            <person name="Sasaki N."/>
            <person name="Aotsuka S."/>
            <person name="Yoshikawa Y."/>
            <person name="Matsunawa H."/>
            <person name="Ichihara T."/>
            <person name="Shiohata N."/>
            <person name="Sano S."/>
            <person name="Moriya S."/>
            <person name="Momiyama H."/>
            <person name="Satoh N."/>
            <person name="Takami S."/>
            <person name="Terashima Y."/>
            <person name="Suzuki O."/>
            <person name="Nakagawa S."/>
            <person name="Senoh A."/>
            <person name="Mizoguchi H."/>
            <person name="Goto Y."/>
            <person name="Shimizu F."/>
            <person name="Wakebe H."/>
            <person name="Hishigaki H."/>
            <person name="Watanabe T."/>
            <person name="Sugiyama A."/>
            <person name="Takemoto M."/>
            <person name="Kawakami B."/>
            <person name="Yamazaki M."/>
            <person name="Watanabe K."/>
            <person name="Kumagai A."/>
            <person name="Itakura S."/>
            <person name="Fukuzumi Y."/>
            <person name="Fujimori Y."/>
            <person name="Komiyama M."/>
            <person name="Tashiro H."/>
            <person name="Tanigami A."/>
            <person name="Fujiwara T."/>
            <person name="Ono T."/>
            <person name="Yamada K."/>
            <person name="Fujii Y."/>
            <person name="Ozaki K."/>
            <person name="Hirao M."/>
            <person name="Ohmori Y."/>
            <person name="Kawabata A."/>
            <person name="Hikiji T."/>
            <person name="Kobatake N."/>
            <person name="Inagaki H."/>
            <person name="Ikema Y."/>
            <person name="Okamoto S."/>
            <person name="Okitani R."/>
            <person name="Kawakami T."/>
            <person name="Noguchi S."/>
            <person name="Itoh T."/>
            <person name="Shigeta K."/>
            <person name="Senba T."/>
            <person name="Matsumura K."/>
            <person name="Nakajima Y."/>
            <person name="Mizuno T."/>
            <person name="Morinaga M."/>
            <person name="Sasaki M."/>
            <person name="Togashi T."/>
            <person name="Oyama M."/>
            <person name="Hata H."/>
            <person name="Watanabe M."/>
            <person name="Komatsu T."/>
            <person name="Mizushima-Sugano J."/>
            <person name="Satoh T."/>
            <person name="Shirai Y."/>
            <person name="Takahashi Y."/>
            <person name="Nakagawa K."/>
            <person name="Okumura K."/>
            <person name="Nagase T."/>
            <person name="Nomura N."/>
            <person name="Kikuchi H."/>
            <person name="Masuho Y."/>
            <person name="Yamashita R."/>
            <person name="Nakai K."/>
            <person name="Yada T."/>
            <person name="Nakamura Y."/>
            <person name="Ohara O."/>
            <person name="Isogai T."/>
            <person name="Sugano S."/>
        </authorList>
    </citation>
    <scope>NUCLEOTIDE SEQUENCE [LARGE SCALE MRNA] (ISOFORMS 1; 3 AND 4)</scope>
    <source>
        <tissue>Amygdala</tissue>
        <tissue>Placenta</tissue>
        <tissue>Thymus</tissue>
    </source>
</reference>
<reference key="9">
    <citation type="journal article" date="2006" name="Nature">
        <title>Human chromosome 11 DNA sequence and analysis including novel gene identification.</title>
        <authorList>
            <person name="Taylor T.D."/>
            <person name="Noguchi H."/>
            <person name="Totoki Y."/>
            <person name="Toyoda A."/>
            <person name="Kuroki Y."/>
            <person name="Dewar K."/>
            <person name="Lloyd C."/>
            <person name="Itoh T."/>
            <person name="Takeda T."/>
            <person name="Kim D.-W."/>
            <person name="She X."/>
            <person name="Barlow K.F."/>
            <person name="Bloom T."/>
            <person name="Bruford E."/>
            <person name="Chang J.L."/>
            <person name="Cuomo C.A."/>
            <person name="Eichler E."/>
            <person name="FitzGerald M.G."/>
            <person name="Jaffe D.B."/>
            <person name="LaButti K."/>
            <person name="Nicol R."/>
            <person name="Park H.-S."/>
            <person name="Seaman C."/>
            <person name="Sougnez C."/>
            <person name="Yang X."/>
            <person name="Zimmer A.R."/>
            <person name="Zody M.C."/>
            <person name="Birren B.W."/>
            <person name="Nusbaum C."/>
            <person name="Fujiyama A."/>
            <person name="Hattori M."/>
            <person name="Rogers J."/>
            <person name="Lander E.S."/>
            <person name="Sakaki Y."/>
        </authorList>
    </citation>
    <scope>NUCLEOTIDE SEQUENCE [LARGE SCALE GENOMIC DNA]</scope>
</reference>
<reference key="10">
    <citation type="submission" date="2005-07" db="EMBL/GenBank/DDBJ databases">
        <authorList>
            <person name="Mural R.J."/>
            <person name="Istrail S."/>
            <person name="Sutton G.G."/>
            <person name="Florea L."/>
            <person name="Halpern A.L."/>
            <person name="Mobarry C.M."/>
            <person name="Lippert R."/>
            <person name="Walenz B."/>
            <person name="Shatkay H."/>
            <person name="Dew I."/>
            <person name="Miller J.R."/>
            <person name="Flanigan M.J."/>
            <person name="Edwards N.J."/>
            <person name="Bolanos R."/>
            <person name="Fasulo D."/>
            <person name="Halldorsson B.V."/>
            <person name="Hannenhalli S."/>
            <person name="Turner R."/>
            <person name="Yooseph S."/>
            <person name="Lu F."/>
            <person name="Nusskern D.R."/>
            <person name="Shue B.C."/>
            <person name="Zheng X.H."/>
            <person name="Zhong F."/>
            <person name="Delcher A.L."/>
            <person name="Huson D.H."/>
            <person name="Kravitz S.A."/>
            <person name="Mouchard L."/>
            <person name="Reinert K."/>
            <person name="Remington K.A."/>
            <person name="Clark A.G."/>
            <person name="Waterman M.S."/>
            <person name="Eichler E.E."/>
            <person name="Adams M.D."/>
            <person name="Hunkapiller M.W."/>
            <person name="Myers E.W."/>
            <person name="Venter J.C."/>
        </authorList>
    </citation>
    <scope>NUCLEOTIDE SEQUENCE [LARGE SCALE GENOMIC DNA]</scope>
</reference>
<reference key="11">
    <citation type="journal article" date="2004" name="Genome Res.">
        <title>The status, quality, and expansion of the NIH full-length cDNA project: the Mammalian Gene Collection (MGC).</title>
        <authorList>
            <consortium name="The MGC Project Team"/>
        </authorList>
    </citation>
    <scope>NUCLEOTIDE SEQUENCE [LARGE SCALE MRNA] (ISOFORM 1)</scope>
    <source>
        <tissue>Lymph</tissue>
    </source>
</reference>
<reference key="12">
    <citation type="journal article" date="1998" name="Proc. Natl. Acad. Sci. U.S.A.">
        <title>Chromosome translocation based on illegitimate recombination in human tumors.</title>
        <authorList>
            <person name="Zucman-Rossi J."/>
            <person name="Legoix P."/>
            <person name="Victor J.M."/>
            <person name="Lopez B."/>
            <person name="Thomas G."/>
        </authorList>
    </citation>
    <scope>NUCLEOTIDE SEQUENCE [GENOMIC DNA] OF 58-452</scope>
</reference>
<reference key="13">
    <citation type="journal article" date="1995" name="Genes Chromosomes Cancer">
        <title>Molecular analysis of a t(11;22) translocation junction in a case of Ewing's sarcoma.</title>
        <authorList>
            <person name="Bhagirath T."/>
            <person name="Abe S."/>
            <person name="Nojima T."/>
            <person name="Yoshida M.C."/>
        </authorList>
    </citation>
    <scope>NUCLEOTIDE SEQUENCE [GENOMIC DNA] OF 278-301</scope>
    <source>
        <tissue>Placenta</tissue>
    </source>
</reference>
<reference key="14">
    <citation type="journal article" date="2009" name="Sci. Signal.">
        <title>Quantitative phosphoproteomic analysis of T cell receptor signaling reveals system-wide modulation of protein-protein interactions.</title>
        <authorList>
            <person name="Mayya V."/>
            <person name="Lundgren D.H."/>
            <person name="Hwang S.-I."/>
            <person name="Rezaul K."/>
            <person name="Wu L."/>
            <person name="Eng J.K."/>
            <person name="Rodionov V."/>
            <person name="Han D.K."/>
        </authorList>
    </citation>
    <scope>IDENTIFICATION BY MASS SPECTROMETRY [LARGE SCALE ANALYSIS]</scope>
    <source>
        <tissue>Leukemic T-cell</tissue>
    </source>
</reference>
<reference key="15">
    <citation type="journal article" date="2013" name="Blood">
        <title>Enrichment of FLI1 and RUNX1 mutations in families with excessive bleeding and platelet dense granule secretion defects.</title>
        <authorList>
            <consortium name="UK Genotyping and Phenotyping of Platelets Study Group"/>
            <person name="Stockley J."/>
            <person name="Morgan N.V."/>
            <person name="Bem D."/>
            <person name="Lowe G.C."/>
            <person name="Lordkipanidze M."/>
            <person name="Dawood B."/>
            <person name="Simpson M.A."/>
            <person name="Macfarlane K."/>
            <person name="Horner K."/>
            <person name="Leo V.C."/>
            <person name="Talks K."/>
            <person name="Motwani J."/>
            <person name="Wilde J.T."/>
            <person name="Collins P.W."/>
            <person name="Makris M."/>
            <person name="Watson S.P."/>
            <person name="Daly M.E."/>
        </authorList>
    </citation>
    <scope>FUNCTION</scope>
    <scope>INVOLVEMENT IN BDPLT21</scope>
    <scope>VARIANTS BDPLT21 TRP-337 AND CYS-343</scope>
    <scope>CHARACTERIZATION OF VARIANTS BDPLT21 TRP-337 AND CYS-343</scope>
</reference>
<reference key="16">
    <citation type="journal article" date="2015" name="Blood">
        <title>Paris-Trousseau thrombocytopenia is phenocopied by the autosomal recessive inheritance of a DNA-binding domain mutation in FLI1.</title>
        <authorList>
            <person name="Stevenson W.S."/>
            <person name="Rabbolini D.J."/>
            <person name="Beutler L."/>
            <person name="Chen Q."/>
            <person name="Gabrielli S."/>
            <person name="Mackay J.P."/>
            <person name="Brighton T.A."/>
            <person name="Ward C.M."/>
            <person name="Morel-Kopp M.C."/>
        </authorList>
    </citation>
    <scope>FUNCTION</scope>
    <scope>INVOLVEMENT IN BDPLT21</scope>
    <scope>VARIANT BDPLT21 TRP-324</scope>
    <scope>CHARACTERIZATION OF VARIANT BDPLT21 TRP-324</scope>
</reference>
<reference key="17">
    <citation type="journal article" date="2017" name="Haematologica">
        <title>Macrothrombocytopenia and dense granule deficiency associated with FLI1 variants: ultrastructural and pathogenic features.</title>
        <authorList>
            <person name="Saultier P."/>
            <person name="Vidal L."/>
            <person name="Canault M."/>
            <person name="Bernot D."/>
            <person name="Falaise C."/>
            <person name="Pouymayou C."/>
            <person name="Bordet J.C."/>
            <person name="Saut N."/>
            <person name="Rostan A."/>
            <person name="Baccini V."/>
            <person name="Peiretti F."/>
            <person name="Favier M."/>
            <person name="Lucca P."/>
            <person name="Deleuze J.F."/>
            <person name="Olaso R."/>
            <person name="Boland A."/>
            <person name="Morange P.E."/>
            <person name="Gachet C."/>
            <person name="Malergue F."/>
            <person name="Faure S."/>
            <person name="Eckly A."/>
            <person name="Tregouet D.A."/>
            <person name="Poggi M."/>
            <person name="Alessi M.C."/>
        </authorList>
    </citation>
    <scope>FUNCTION</scope>
    <scope>SUBCELLULAR LOCATION</scope>
    <scope>INVOLVEMENT IN BDPLT21</scope>
    <scope>VARIANTS BDPLT21 GLN-337 AND GLU-345</scope>
    <scope>CHARACTERIZATION OF VARIANTS BDPLT21 GLN-337 AND GLU-345</scope>
</reference>
<reference key="18">
    <citation type="journal article" date="1994" name="Nat. Struct. Biol.">
        <title>Solution structure of the ets domain of Fli-1 when bound to DNA.</title>
        <authorList>
            <person name="Liang H."/>
            <person name="Mao X."/>
            <person name="Olejniczak E.T."/>
            <person name="Nettesheim D.G."/>
            <person name="Yu L."/>
            <person name="Meadows R.P."/>
            <person name="Thompson C.B."/>
            <person name="Fesik S.W."/>
        </authorList>
    </citation>
    <scope>STRUCTURE BY NMR OF 276-373</scope>
</reference>
<reference key="19">
    <citation type="submission" date="2005-11" db="PDB data bank">
        <title>Solution structure of the SAM_pnt-domain of the human Friend leukemia integration 1 transcription factor.</title>
        <authorList>
            <consortium name="RIKEN structural genomics initiative (RSGI)"/>
        </authorList>
    </citation>
    <scope>STRUCTURE BY NMR OF 114-198</scope>
</reference>
<sequence length="452" mass="50982">MDGTIKEALSVVSDDQSLFDSAYGAAAHLPKADMTASGSPDYGQPHKINPLPPQQEWINQPVRVNVKREYDHMNGSRESPVDCSVSKCSKLVGGGESNPMNYNSYMDEKNGPPPPNMTTNERRVIVPADPTLWTQEHVRQWLEWAIKEYSLMEIDTSFFQNMDGKELCKMNKEDFLRATTLYNTEVLLSHLSYLRESSLLAYNTTSHTDQSSRLSVKEDPSYDSVRRGAWGNNMNSGLNKSPPLGGAQTISKNTEQRPQPDPYQILGPTSSRLANPGSGQIQLWQFLLELLSDSANASCITWEGTNGEFKMTDPDEVARRWGERKSKPNMNYDKLSRALRYYYDKNIMTKVHGKRYAYKFDFHGIAQALQPHPTESSMYKYPSDISYMPSYHAHQQKVNFVPPHPSSMPVTSSSFFGAASQYWTSPTGGIYPNPNVPRHPNTHVPSHLGSYY</sequence>
<evidence type="ECO:0000250" key="1">
    <source>
        <dbReference type="UniProtKB" id="P26323"/>
    </source>
</evidence>
<evidence type="ECO:0000255" key="2">
    <source>
        <dbReference type="PROSITE-ProRule" id="PRU00237"/>
    </source>
</evidence>
<evidence type="ECO:0000255" key="3">
    <source>
        <dbReference type="PROSITE-ProRule" id="PRU00762"/>
    </source>
</evidence>
<evidence type="ECO:0000256" key="4">
    <source>
        <dbReference type="SAM" id="MobiDB-lite"/>
    </source>
</evidence>
<evidence type="ECO:0000269" key="5">
    <source>
    </source>
</evidence>
<evidence type="ECO:0000269" key="6">
    <source>
    </source>
</evidence>
<evidence type="ECO:0000269" key="7">
    <source>
    </source>
</evidence>
<evidence type="ECO:0000269" key="8">
    <source>
    </source>
</evidence>
<evidence type="ECO:0000269" key="9">
    <source>
    </source>
</evidence>
<evidence type="ECO:0000303" key="10">
    <source>
    </source>
</evidence>
<evidence type="ECO:0000303" key="11">
    <source>
    </source>
</evidence>
<evidence type="ECO:0000303" key="12">
    <source>
    </source>
</evidence>
<evidence type="ECO:0000305" key="13"/>
<evidence type="ECO:0007829" key="14">
    <source>
        <dbReference type="PDB" id="1X66"/>
    </source>
</evidence>
<evidence type="ECO:0007829" key="15">
    <source>
        <dbReference type="PDB" id="2YTU"/>
    </source>
</evidence>
<evidence type="ECO:0007829" key="16">
    <source>
        <dbReference type="PDB" id="5E8G"/>
    </source>
</evidence>
<evidence type="ECO:0007829" key="17">
    <source>
        <dbReference type="PDB" id="5E8I"/>
    </source>
</evidence>
<protein>
    <recommendedName>
        <fullName>Friend leukemia integration 1 transcription factor</fullName>
    </recommendedName>
    <alternativeName>
        <fullName>Proto-oncogene Fli-1</fullName>
    </alternativeName>
    <alternativeName>
        <fullName>Transcription factor ERGB</fullName>
    </alternativeName>
</protein>